<gene>
    <name evidence="1" type="primary">upp</name>
    <name type="ordered locus">VCM66_2148</name>
</gene>
<dbReference type="EC" id="2.4.2.9" evidence="1"/>
<dbReference type="EMBL" id="CP001233">
    <property type="protein sequence ID" value="ACP06449.1"/>
    <property type="molecule type" value="Genomic_DNA"/>
</dbReference>
<dbReference type="RefSeq" id="WP_001887652.1">
    <property type="nucleotide sequence ID" value="NC_012578.1"/>
</dbReference>
<dbReference type="SMR" id="C3LPM9"/>
<dbReference type="GeneID" id="89513786"/>
<dbReference type="KEGG" id="vcm:VCM66_2148"/>
<dbReference type="HOGENOM" id="CLU_067096_2_2_6"/>
<dbReference type="UniPathway" id="UPA00574">
    <property type="reaction ID" value="UER00636"/>
</dbReference>
<dbReference type="Proteomes" id="UP000001217">
    <property type="component" value="Chromosome I"/>
</dbReference>
<dbReference type="GO" id="GO:0005525">
    <property type="term" value="F:GTP binding"/>
    <property type="evidence" value="ECO:0007669"/>
    <property type="project" value="UniProtKB-KW"/>
</dbReference>
<dbReference type="GO" id="GO:0000287">
    <property type="term" value="F:magnesium ion binding"/>
    <property type="evidence" value="ECO:0007669"/>
    <property type="project" value="UniProtKB-UniRule"/>
</dbReference>
<dbReference type="GO" id="GO:0004845">
    <property type="term" value="F:uracil phosphoribosyltransferase activity"/>
    <property type="evidence" value="ECO:0007669"/>
    <property type="project" value="UniProtKB-UniRule"/>
</dbReference>
<dbReference type="GO" id="GO:0044206">
    <property type="term" value="P:UMP salvage"/>
    <property type="evidence" value="ECO:0007669"/>
    <property type="project" value="UniProtKB-UniRule"/>
</dbReference>
<dbReference type="GO" id="GO:0006223">
    <property type="term" value="P:uracil salvage"/>
    <property type="evidence" value="ECO:0007669"/>
    <property type="project" value="InterPro"/>
</dbReference>
<dbReference type="CDD" id="cd06223">
    <property type="entry name" value="PRTases_typeI"/>
    <property type="match status" value="1"/>
</dbReference>
<dbReference type="FunFam" id="3.40.50.2020:FF:000003">
    <property type="entry name" value="Uracil phosphoribosyltransferase"/>
    <property type="match status" value="1"/>
</dbReference>
<dbReference type="Gene3D" id="3.40.50.2020">
    <property type="match status" value="1"/>
</dbReference>
<dbReference type="HAMAP" id="MF_01218_B">
    <property type="entry name" value="Upp_B"/>
    <property type="match status" value="1"/>
</dbReference>
<dbReference type="InterPro" id="IPR000836">
    <property type="entry name" value="PRibTrfase_dom"/>
</dbReference>
<dbReference type="InterPro" id="IPR029057">
    <property type="entry name" value="PRTase-like"/>
</dbReference>
<dbReference type="InterPro" id="IPR034332">
    <property type="entry name" value="Upp_B"/>
</dbReference>
<dbReference type="InterPro" id="IPR050054">
    <property type="entry name" value="UPRTase/APRTase"/>
</dbReference>
<dbReference type="InterPro" id="IPR005765">
    <property type="entry name" value="Ura_phspho_trans"/>
</dbReference>
<dbReference type="NCBIfam" id="NF001097">
    <property type="entry name" value="PRK00129.1"/>
    <property type="match status" value="1"/>
</dbReference>
<dbReference type="NCBIfam" id="TIGR01091">
    <property type="entry name" value="upp"/>
    <property type="match status" value="1"/>
</dbReference>
<dbReference type="PANTHER" id="PTHR32315">
    <property type="entry name" value="ADENINE PHOSPHORIBOSYLTRANSFERASE"/>
    <property type="match status" value="1"/>
</dbReference>
<dbReference type="PANTHER" id="PTHR32315:SF4">
    <property type="entry name" value="URACIL PHOSPHORIBOSYLTRANSFERASE, CHLOROPLASTIC"/>
    <property type="match status" value="1"/>
</dbReference>
<dbReference type="Pfam" id="PF14681">
    <property type="entry name" value="UPRTase"/>
    <property type="match status" value="1"/>
</dbReference>
<dbReference type="SUPFAM" id="SSF53271">
    <property type="entry name" value="PRTase-like"/>
    <property type="match status" value="1"/>
</dbReference>
<organism>
    <name type="scientific">Vibrio cholerae serotype O1 (strain M66-2)</name>
    <dbReference type="NCBI Taxonomy" id="579112"/>
    <lineage>
        <taxon>Bacteria</taxon>
        <taxon>Pseudomonadati</taxon>
        <taxon>Pseudomonadota</taxon>
        <taxon>Gammaproteobacteria</taxon>
        <taxon>Vibrionales</taxon>
        <taxon>Vibrionaceae</taxon>
        <taxon>Vibrio</taxon>
    </lineage>
</organism>
<accession>C3LPM9</accession>
<comment type="function">
    <text evidence="1">Catalyzes the conversion of uracil and 5-phospho-alpha-D-ribose 1-diphosphate (PRPP) to UMP and diphosphate.</text>
</comment>
<comment type="catalytic activity">
    <reaction evidence="1">
        <text>UMP + diphosphate = 5-phospho-alpha-D-ribose 1-diphosphate + uracil</text>
        <dbReference type="Rhea" id="RHEA:13017"/>
        <dbReference type="ChEBI" id="CHEBI:17568"/>
        <dbReference type="ChEBI" id="CHEBI:33019"/>
        <dbReference type="ChEBI" id="CHEBI:57865"/>
        <dbReference type="ChEBI" id="CHEBI:58017"/>
        <dbReference type="EC" id="2.4.2.9"/>
    </reaction>
</comment>
<comment type="cofactor">
    <cofactor evidence="1">
        <name>Mg(2+)</name>
        <dbReference type="ChEBI" id="CHEBI:18420"/>
    </cofactor>
    <text evidence="1">Binds 1 Mg(2+) ion per subunit. The magnesium is bound as Mg-PRPP.</text>
</comment>
<comment type="activity regulation">
    <text evidence="1">Allosterically activated by GTP.</text>
</comment>
<comment type="pathway">
    <text evidence="1">Pyrimidine metabolism; UMP biosynthesis via salvage pathway; UMP from uracil: step 1/1.</text>
</comment>
<comment type="similarity">
    <text evidence="1">Belongs to the UPRTase family.</text>
</comment>
<name>UPP_VIBCM</name>
<sequence length="208" mass="22680">MKIVEVKHPLVKHKLGLMREGDISTKRFRELATEVASLLTYEATSDFETEKVTIEGWNGPVQVDQIKGKKVTVVPILRAGLGMMDGVLEHIPSARISVVGIYRDEETLEPVPYFNKLATNIEERIAMVVDPMLATGGSMIATIDLLKEKGCNQIKVLVLVAAPEGIAALEKAHPDVELYTAAIDEKLNDKGYIVPGLGDAGDKIFGTK</sequence>
<protein>
    <recommendedName>
        <fullName evidence="1">Uracil phosphoribosyltransferase</fullName>
        <ecNumber evidence="1">2.4.2.9</ecNumber>
    </recommendedName>
    <alternativeName>
        <fullName evidence="1">UMP pyrophosphorylase</fullName>
    </alternativeName>
    <alternativeName>
        <fullName evidence="1">UPRTase</fullName>
    </alternativeName>
</protein>
<keyword id="KW-0021">Allosteric enzyme</keyword>
<keyword id="KW-0328">Glycosyltransferase</keyword>
<keyword id="KW-0342">GTP-binding</keyword>
<keyword id="KW-0460">Magnesium</keyword>
<keyword id="KW-0547">Nucleotide-binding</keyword>
<keyword id="KW-0808">Transferase</keyword>
<feature type="chain" id="PRO_1000164839" description="Uracil phosphoribosyltransferase">
    <location>
        <begin position="1"/>
        <end position="208"/>
    </location>
</feature>
<feature type="binding site" evidence="1">
    <location>
        <position position="78"/>
    </location>
    <ligand>
        <name>5-phospho-alpha-D-ribose 1-diphosphate</name>
        <dbReference type="ChEBI" id="CHEBI:58017"/>
    </ligand>
</feature>
<feature type="binding site" evidence="1">
    <location>
        <position position="103"/>
    </location>
    <ligand>
        <name>5-phospho-alpha-D-ribose 1-diphosphate</name>
        <dbReference type="ChEBI" id="CHEBI:58017"/>
    </ligand>
</feature>
<feature type="binding site" evidence="1">
    <location>
        <begin position="130"/>
        <end position="138"/>
    </location>
    <ligand>
        <name>5-phospho-alpha-D-ribose 1-diphosphate</name>
        <dbReference type="ChEBI" id="CHEBI:58017"/>
    </ligand>
</feature>
<feature type="binding site" evidence="1">
    <location>
        <position position="193"/>
    </location>
    <ligand>
        <name>uracil</name>
        <dbReference type="ChEBI" id="CHEBI:17568"/>
    </ligand>
</feature>
<feature type="binding site" evidence="1">
    <location>
        <begin position="198"/>
        <end position="200"/>
    </location>
    <ligand>
        <name>uracil</name>
        <dbReference type="ChEBI" id="CHEBI:17568"/>
    </ligand>
</feature>
<feature type="binding site" evidence="1">
    <location>
        <position position="199"/>
    </location>
    <ligand>
        <name>5-phospho-alpha-D-ribose 1-diphosphate</name>
        <dbReference type="ChEBI" id="CHEBI:58017"/>
    </ligand>
</feature>
<proteinExistence type="inferred from homology"/>
<evidence type="ECO:0000255" key="1">
    <source>
        <dbReference type="HAMAP-Rule" id="MF_01218"/>
    </source>
</evidence>
<reference key="1">
    <citation type="journal article" date="2008" name="PLoS ONE">
        <title>A recalibrated molecular clock and independent origins for the cholera pandemic clones.</title>
        <authorList>
            <person name="Feng L."/>
            <person name="Reeves P.R."/>
            <person name="Lan R."/>
            <person name="Ren Y."/>
            <person name="Gao C."/>
            <person name="Zhou Z."/>
            <person name="Ren Y."/>
            <person name="Cheng J."/>
            <person name="Wang W."/>
            <person name="Wang J."/>
            <person name="Qian W."/>
            <person name="Li D."/>
            <person name="Wang L."/>
        </authorList>
    </citation>
    <scope>NUCLEOTIDE SEQUENCE [LARGE SCALE GENOMIC DNA]</scope>
    <source>
        <strain>M66-2</strain>
    </source>
</reference>